<sequence>MLPGFGATQTVSPFPNPPEYASAYTSDRIDNGSAPPPPHPLTEFKVFGEEYRLEEDVIAPLSTAGVEQYYVDKNNWKAEMKKLNRXIGAFFDLLEVLIRAPDHPARDKKMVDLHTIFINMHHLINEFRPVQARDSVRILQERQIDELTEICDDFREYLAHGREVVEDQFKMITGKLPPPPPPSDLTRVRMQNGALHRLIEVEKETEEDEEMKEDDEEKPSTSSSEGNQKTLRDMTKGHGPPSVVNLLARQLNEMELKK</sequence>
<evidence type="ECO:0000250" key="1"/>
<evidence type="ECO:0000256" key="2">
    <source>
        <dbReference type="SAM" id="MobiDB-lite"/>
    </source>
</evidence>
<evidence type="ECO:0000305" key="3"/>
<feature type="chain" id="PRO_0000303185" description="Mediator of RNA polymerase II transcription subunit 7">
    <location>
        <begin position="1"/>
        <end position="258"/>
    </location>
</feature>
<feature type="region of interest" description="Disordered" evidence="2">
    <location>
        <begin position="1"/>
        <end position="39"/>
    </location>
</feature>
<feature type="region of interest" description="Disordered" evidence="2">
    <location>
        <begin position="202"/>
        <end position="243"/>
    </location>
</feature>
<feature type="compositionally biased region" description="Acidic residues" evidence="2">
    <location>
        <begin position="203"/>
        <end position="217"/>
    </location>
</feature>
<feature type="compositionally biased region" description="Polar residues" evidence="2">
    <location>
        <begin position="220"/>
        <end position="229"/>
    </location>
</feature>
<proteinExistence type="inferred from homology"/>
<protein>
    <recommendedName>
        <fullName>Mediator of RNA polymerase II transcription subunit 7</fullName>
    </recommendedName>
    <alternativeName>
        <fullName>Lethal protein 49</fullName>
    </alternativeName>
    <alternativeName>
        <fullName>Mediator complex subunit 7</fullName>
    </alternativeName>
</protein>
<reference key="1">
    <citation type="journal article" date="2003" name="PLoS Biol.">
        <title>The genome sequence of Caenorhabditis briggsae: a platform for comparative genomics.</title>
        <authorList>
            <person name="Stein L.D."/>
            <person name="Bao Z."/>
            <person name="Blasiar D."/>
            <person name="Blumenthal T."/>
            <person name="Brent M.R."/>
            <person name="Chen N."/>
            <person name="Chinwalla A."/>
            <person name="Clarke L."/>
            <person name="Clee C."/>
            <person name="Coghlan A."/>
            <person name="Coulson A."/>
            <person name="D'Eustachio P."/>
            <person name="Fitch D.H.A."/>
            <person name="Fulton L.A."/>
            <person name="Fulton R.E."/>
            <person name="Griffiths-Jones S."/>
            <person name="Harris T.W."/>
            <person name="Hillier L.W."/>
            <person name="Kamath R."/>
            <person name="Kuwabara P.E."/>
            <person name="Mardis E.R."/>
            <person name="Marra M.A."/>
            <person name="Miner T.L."/>
            <person name="Minx P."/>
            <person name="Mullikin J.C."/>
            <person name="Plumb R.W."/>
            <person name="Rogers J."/>
            <person name="Schein J.E."/>
            <person name="Sohrmann M."/>
            <person name="Spieth J."/>
            <person name="Stajich J.E."/>
            <person name="Wei C."/>
            <person name="Willey D."/>
            <person name="Wilson R.K."/>
            <person name="Durbin R.M."/>
            <person name="Waterston R.H."/>
        </authorList>
    </citation>
    <scope>NUCLEOTIDE SEQUENCE [LARGE SCALE GENOMIC DNA]</scope>
    <source>
        <strain>AF16</strain>
    </source>
</reference>
<organism>
    <name type="scientific">Caenorhabditis briggsae</name>
    <dbReference type="NCBI Taxonomy" id="6238"/>
    <lineage>
        <taxon>Eukaryota</taxon>
        <taxon>Metazoa</taxon>
        <taxon>Ecdysozoa</taxon>
        <taxon>Nematoda</taxon>
        <taxon>Chromadorea</taxon>
        <taxon>Rhabditida</taxon>
        <taxon>Rhabditina</taxon>
        <taxon>Rhabditomorpha</taxon>
        <taxon>Rhabditoidea</taxon>
        <taxon>Rhabditidae</taxon>
        <taxon>Peloderinae</taxon>
        <taxon>Caenorhabditis</taxon>
    </lineage>
</organism>
<gene>
    <name type="primary">let-49</name>
    <name type="synonym">mdt-7</name>
    <name type="ORF">CBG19704</name>
</gene>
<keyword id="KW-0010">Activator</keyword>
<keyword id="KW-0539">Nucleus</keyword>
<keyword id="KW-1185">Reference proteome</keyword>
<keyword id="KW-0804">Transcription</keyword>
<keyword id="KW-0805">Transcription regulation</keyword>
<accession>Q60V43</accession>
<accession>A8XWI6</accession>
<comment type="function">
    <text evidence="1">Component of the Mediator complex, a coactivator involved in the regulated transcription of nearly all RNA polymerase II-dependent genes. Mediator functions as a bridge to convey information from gene-specific regulatory proteins to the basal RNA polymerase II transcription machinery. Mediator is recruited to promoters by direct interactions with regulatory proteins and serves as a scaffold for the assembly of a functional preinitiation complex with RNA polymerase II and the general transcription factors (By similarity).</text>
</comment>
<comment type="subunit">
    <text evidence="1">Component of the Mediator complex.</text>
</comment>
<comment type="subcellular location">
    <subcellularLocation>
        <location evidence="1">Nucleus</location>
    </subcellularLocation>
</comment>
<comment type="similarity">
    <text evidence="3">Belongs to the Mediator complex subunit 7 family.</text>
</comment>
<name>MED7_CAEBR</name>
<dbReference type="EMBL" id="HE601474">
    <property type="protein sequence ID" value="CAP37005.3"/>
    <property type="molecule type" value="Genomic_DNA"/>
</dbReference>
<dbReference type="FunCoup" id="Q60V43">
    <property type="interactions" value="2434"/>
</dbReference>
<dbReference type="STRING" id="6238.Q60V43"/>
<dbReference type="EnsemblMetazoa" id="CBG19704.1">
    <property type="protein sequence ID" value="CBG19704.1"/>
    <property type="gene ID" value="WBGene00038878"/>
</dbReference>
<dbReference type="KEGG" id="cbr:CBG_19704"/>
<dbReference type="CTD" id="8582641"/>
<dbReference type="WormBase" id="CBG19704">
    <property type="protein sequence ID" value="CBP04603"/>
    <property type="gene ID" value="WBGene00038878"/>
    <property type="gene designation" value="Cbr-let-49"/>
</dbReference>
<dbReference type="eggNOG" id="KOG0570">
    <property type="taxonomic scope" value="Eukaryota"/>
</dbReference>
<dbReference type="HOGENOM" id="CLU_065214_2_0_1"/>
<dbReference type="InParanoid" id="Q60V43"/>
<dbReference type="OMA" id="HTIFINM"/>
<dbReference type="Proteomes" id="UP000008549">
    <property type="component" value="Unassembled WGS sequence"/>
</dbReference>
<dbReference type="GO" id="GO:0070847">
    <property type="term" value="C:core mediator complex"/>
    <property type="evidence" value="ECO:0000318"/>
    <property type="project" value="GO_Central"/>
</dbReference>
<dbReference type="GO" id="GO:0016592">
    <property type="term" value="C:mediator complex"/>
    <property type="evidence" value="ECO:0000318"/>
    <property type="project" value="GO_Central"/>
</dbReference>
<dbReference type="GO" id="GO:0003712">
    <property type="term" value="F:transcription coregulator activity"/>
    <property type="evidence" value="ECO:0007669"/>
    <property type="project" value="InterPro"/>
</dbReference>
<dbReference type="GO" id="GO:0009792">
    <property type="term" value="P:embryo development ending in birth or egg hatching"/>
    <property type="evidence" value="ECO:0007669"/>
    <property type="project" value="EnsemblMetazoa"/>
</dbReference>
<dbReference type="GO" id="GO:0006357">
    <property type="term" value="P:regulation of transcription by RNA polymerase II"/>
    <property type="evidence" value="ECO:0000318"/>
    <property type="project" value="GO_Central"/>
</dbReference>
<dbReference type="Gene3D" id="6.10.140.200">
    <property type="match status" value="1"/>
</dbReference>
<dbReference type="InterPro" id="IPR037212">
    <property type="entry name" value="Med7/Med21-like"/>
</dbReference>
<dbReference type="InterPro" id="IPR009244">
    <property type="entry name" value="Mediatior_Med7"/>
</dbReference>
<dbReference type="InterPro" id="IPR044888">
    <property type="entry name" value="Mediatior_Med7_sf"/>
</dbReference>
<dbReference type="PANTHER" id="PTHR21428">
    <property type="entry name" value="MEDIATOR OF RNA POLYMERASE II TRANSCRIPTION SUBUNIT 7"/>
    <property type="match status" value="1"/>
</dbReference>
<dbReference type="PANTHER" id="PTHR21428:SF11">
    <property type="entry name" value="MEDIATOR OF RNA POLYMERASE II TRANSCRIPTION SUBUNIT 7"/>
    <property type="match status" value="1"/>
</dbReference>
<dbReference type="Pfam" id="PF05983">
    <property type="entry name" value="Med7"/>
    <property type="match status" value="1"/>
</dbReference>
<dbReference type="SUPFAM" id="SSF140718">
    <property type="entry name" value="Mediator hinge subcomplex-like"/>
    <property type="match status" value="1"/>
</dbReference>